<sequence>MAAGYRAEDDYDYLFKVVLIGDSGVGKSNLLSRFTRNEFSLESKSTIGVEFATRSLQVDGKVVKAQIWDTAGQERYRAITSAYYRGAVGALLVYDVTRHSTFENVERWLKELRDHTDPNIVVMLVGNKSDLRHLVAVQTDEGKAFAERESLYFMETSALESTNVENAFAEVLTQIYRIVSKRSVEAGDDAGSGPGKGEKINIKDDVSAVKKGGCCSG</sequence>
<keyword id="KW-1003">Cell membrane</keyword>
<keyword id="KW-0342">GTP-binding</keyword>
<keyword id="KW-0449">Lipoprotein</keyword>
<keyword id="KW-0472">Membrane</keyword>
<keyword id="KW-0547">Nucleotide-binding</keyword>
<keyword id="KW-0636">Prenylation</keyword>
<keyword id="KW-1185">Reference proteome</keyword>
<dbReference type="EMBL" id="D13758">
    <property type="protein sequence ID" value="BAA02904.1"/>
    <property type="molecule type" value="mRNA"/>
</dbReference>
<dbReference type="EMBL" id="AF327517">
    <property type="protein sequence ID" value="AAK15703.1"/>
    <property type="molecule type" value="mRNA"/>
</dbReference>
<dbReference type="EMBL" id="AP003686">
    <property type="protein sequence ID" value="BAD53715.1"/>
    <property type="molecule type" value="Genomic_DNA"/>
</dbReference>
<dbReference type="EMBL" id="AP008212">
    <property type="protein sequence ID" value="BAF19751.1"/>
    <property type="molecule type" value="Genomic_DNA"/>
</dbReference>
<dbReference type="EMBL" id="AP014962">
    <property type="protein sequence ID" value="BAS98191.1"/>
    <property type="molecule type" value="Genomic_DNA"/>
</dbReference>
<dbReference type="EMBL" id="CM000143">
    <property type="protein sequence ID" value="EEE65860.1"/>
    <property type="molecule type" value="Genomic_DNA"/>
</dbReference>
<dbReference type="EMBL" id="AK066548">
    <property type="protein sequence ID" value="BAG90024.1"/>
    <property type="molecule type" value="mRNA"/>
</dbReference>
<dbReference type="PIR" id="S38741">
    <property type="entry name" value="S38741"/>
</dbReference>
<dbReference type="RefSeq" id="XP_015644018.1">
    <property type="nucleotide sequence ID" value="XM_015788532.1"/>
</dbReference>
<dbReference type="SMR" id="P40393"/>
<dbReference type="BioGRID" id="810303">
    <property type="interactions" value="1"/>
</dbReference>
<dbReference type="FunCoup" id="P40393">
    <property type="interactions" value="2929"/>
</dbReference>
<dbReference type="STRING" id="39947.P40393"/>
<dbReference type="PaxDb" id="39947-P40393"/>
<dbReference type="EnsemblPlants" id="Os06t0551400-01">
    <property type="protein sequence ID" value="Os06t0551400-01"/>
    <property type="gene ID" value="Os06g0551400"/>
</dbReference>
<dbReference type="Gramene" id="Os06t0551400-01">
    <property type="protein sequence ID" value="Os06t0551400-01"/>
    <property type="gene ID" value="Os06g0551400"/>
</dbReference>
<dbReference type="KEGG" id="dosa:Os06g0551400"/>
<dbReference type="eggNOG" id="KOG0087">
    <property type="taxonomic scope" value="Eukaryota"/>
</dbReference>
<dbReference type="HOGENOM" id="CLU_041217_23_0_1"/>
<dbReference type="InParanoid" id="P40393"/>
<dbReference type="OMA" id="FAENHTM"/>
<dbReference type="OrthoDB" id="9989112at2759"/>
<dbReference type="Proteomes" id="UP000000763">
    <property type="component" value="Chromosome 6"/>
</dbReference>
<dbReference type="Proteomes" id="UP000007752">
    <property type="component" value="Chromosome 6"/>
</dbReference>
<dbReference type="Proteomes" id="UP000059680">
    <property type="component" value="Chromosome 6"/>
</dbReference>
<dbReference type="GO" id="GO:0012505">
    <property type="term" value="C:endomembrane system"/>
    <property type="evidence" value="ECO:0000318"/>
    <property type="project" value="GO_Central"/>
</dbReference>
<dbReference type="GO" id="GO:0005886">
    <property type="term" value="C:plasma membrane"/>
    <property type="evidence" value="ECO:0007669"/>
    <property type="project" value="UniProtKB-SubCell"/>
</dbReference>
<dbReference type="GO" id="GO:0005525">
    <property type="term" value="F:GTP binding"/>
    <property type="evidence" value="ECO:0007669"/>
    <property type="project" value="UniProtKB-KW"/>
</dbReference>
<dbReference type="GO" id="GO:0003924">
    <property type="term" value="F:GTPase activity"/>
    <property type="evidence" value="ECO:0000318"/>
    <property type="project" value="GO_Central"/>
</dbReference>
<dbReference type="GO" id="GO:0006886">
    <property type="term" value="P:intracellular protein transport"/>
    <property type="evidence" value="ECO:0000318"/>
    <property type="project" value="GO_Central"/>
</dbReference>
<dbReference type="CDD" id="cd01868">
    <property type="entry name" value="Rab11_like"/>
    <property type="match status" value="1"/>
</dbReference>
<dbReference type="FunFam" id="3.40.50.300:FF:000067">
    <property type="entry name" value="ras-related protein RABA1f"/>
    <property type="match status" value="1"/>
</dbReference>
<dbReference type="Gene3D" id="3.40.50.300">
    <property type="entry name" value="P-loop containing nucleotide triphosphate hydrolases"/>
    <property type="match status" value="1"/>
</dbReference>
<dbReference type="InterPro" id="IPR027417">
    <property type="entry name" value="P-loop_NTPase"/>
</dbReference>
<dbReference type="InterPro" id="IPR050209">
    <property type="entry name" value="Rab_GTPases_membrane_traffic"/>
</dbReference>
<dbReference type="InterPro" id="IPR005225">
    <property type="entry name" value="Small_GTP-bd"/>
</dbReference>
<dbReference type="InterPro" id="IPR001806">
    <property type="entry name" value="Small_GTPase"/>
</dbReference>
<dbReference type="NCBIfam" id="TIGR00231">
    <property type="entry name" value="small_GTP"/>
    <property type="match status" value="1"/>
</dbReference>
<dbReference type="PANTHER" id="PTHR47979">
    <property type="entry name" value="DRAB11-RELATED"/>
    <property type="match status" value="1"/>
</dbReference>
<dbReference type="Pfam" id="PF00071">
    <property type="entry name" value="Ras"/>
    <property type="match status" value="1"/>
</dbReference>
<dbReference type="PRINTS" id="PR00449">
    <property type="entry name" value="RASTRNSFRMNG"/>
</dbReference>
<dbReference type="SMART" id="SM00175">
    <property type="entry name" value="RAB"/>
    <property type="match status" value="1"/>
</dbReference>
<dbReference type="SMART" id="SM00176">
    <property type="entry name" value="RAN"/>
    <property type="match status" value="1"/>
</dbReference>
<dbReference type="SMART" id="SM00173">
    <property type="entry name" value="RAS"/>
    <property type="match status" value="1"/>
</dbReference>
<dbReference type="SMART" id="SM00174">
    <property type="entry name" value="RHO"/>
    <property type="match status" value="1"/>
</dbReference>
<dbReference type="SUPFAM" id="SSF52540">
    <property type="entry name" value="P-loop containing nucleoside triphosphate hydrolases"/>
    <property type="match status" value="1"/>
</dbReference>
<dbReference type="PROSITE" id="PS51419">
    <property type="entry name" value="RAB"/>
    <property type="match status" value="1"/>
</dbReference>
<comment type="function">
    <text>Possesses GTPase activity.</text>
</comment>
<comment type="subcellular location">
    <subcellularLocation>
        <location evidence="2">Cell membrane</location>
        <topology evidence="2">Lipid-anchor</topology>
        <orientation evidence="2">Cytoplasmic side</orientation>
    </subcellularLocation>
</comment>
<comment type="similarity">
    <text evidence="2">Belongs to the small GTPase superfamily. Rab family.</text>
</comment>
<evidence type="ECO:0000250" key="1"/>
<evidence type="ECO:0000305" key="2"/>
<evidence type="ECO:0000312" key="3">
    <source>
        <dbReference type="EMBL" id="EEE65860.1"/>
    </source>
</evidence>
<proteinExistence type="evidence at transcript level"/>
<gene>
    <name type="primary">RIC2</name>
    <name type="synonym">SS230</name>
    <name type="ordered locus">Os06g0551400</name>
    <name type="ordered locus">LOC_Os06g35814</name>
    <name evidence="3" type="ORF">OsJ_21648</name>
    <name type="ORF">P0659D09.45</name>
</gene>
<name>RIC2_ORYSJ</name>
<accession>P40393</accession>
<accession>Q0DBM2</accession>
<accession>Q5Z939</accession>
<accession>Q9ATK6</accession>
<protein>
    <recommendedName>
        <fullName>Ras-related protein RIC2</fullName>
    </recommendedName>
</protein>
<reference key="1">
    <citation type="journal article" date="1993" name="FEBS Lett.">
        <title>Molecular structure of ras-related small GTP-binding protein genes of rice plants and GTPase activities of gene products in Escherichia coli.</title>
        <authorList>
            <person name="Uchimiya H."/>
            <person name="Kidou S."/>
            <person name="Anai T."/>
            <person name="Umeda M."/>
            <person name="Aotsuka S."/>
            <person name="Tsuge T."/>
            <person name="Kato A."/>
        </authorList>
    </citation>
    <scope>NUCLEOTIDE SEQUENCE [MRNA]</scope>
    <source>
        <strain>cv. Yamahoushi</strain>
        <tissue>Callus</tissue>
    </source>
</reference>
<reference key="2">
    <citation type="submission" date="2000-12" db="EMBL/GenBank/DDBJ databases">
        <title>A rice GTP-binding protein cDNA induced by infection by blast fungus.</title>
        <authorList>
            <person name="Peng Y.-L."/>
            <person name="Fu Y.-P."/>
            <person name="Su S.-C."/>
        </authorList>
    </citation>
    <scope>NUCLEOTIDE SEQUENCE [MRNA]</scope>
</reference>
<reference key="3">
    <citation type="journal article" date="2005" name="Nature">
        <title>The map-based sequence of the rice genome.</title>
        <authorList>
            <consortium name="International rice genome sequencing project (IRGSP)"/>
        </authorList>
    </citation>
    <scope>NUCLEOTIDE SEQUENCE [LARGE SCALE GENOMIC DNA]</scope>
    <source>
        <strain>cv. Nipponbare</strain>
    </source>
</reference>
<reference key="4">
    <citation type="journal article" date="2008" name="Nucleic Acids Res.">
        <title>The rice annotation project database (RAP-DB): 2008 update.</title>
        <authorList>
            <consortium name="The rice annotation project (RAP)"/>
        </authorList>
    </citation>
    <scope>GENOME REANNOTATION</scope>
    <source>
        <strain>cv. Nipponbare</strain>
    </source>
</reference>
<reference key="5">
    <citation type="journal article" date="2013" name="Rice">
        <title>Improvement of the Oryza sativa Nipponbare reference genome using next generation sequence and optical map data.</title>
        <authorList>
            <person name="Kawahara Y."/>
            <person name="de la Bastide M."/>
            <person name="Hamilton J.P."/>
            <person name="Kanamori H."/>
            <person name="McCombie W.R."/>
            <person name="Ouyang S."/>
            <person name="Schwartz D.C."/>
            <person name="Tanaka T."/>
            <person name="Wu J."/>
            <person name="Zhou S."/>
            <person name="Childs K.L."/>
            <person name="Davidson R.M."/>
            <person name="Lin H."/>
            <person name="Quesada-Ocampo L."/>
            <person name="Vaillancourt B."/>
            <person name="Sakai H."/>
            <person name="Lee S.S."/>
            <person name="Kim J."/>
            <person name="Numa H."/>
            <person name="Itoh T."/>
            <person name="Buell C.R."/>
            <person name="Matsumoto T."/>
        </authorList>
    </citation>
    <scope>GENOME REANNOTATION</scope>
    <source>
        <strain>cv. Nipponbare</strain>
    </source>
</reference>
<reference key="6">
    <citation type="journal article" date="2005" name="PLoS Biol.">
        <title>The genomes of Oryza sativa: a history of duplications.</title>
        <authorList>
            <person name="Yu J."/>
            <person name="Wang J."/>
            <person name="Lin W."/>
            <person name="Li S."/>
            <person name="Li H."/>
            <person name="Zhou J."/>
            <person name="Ni P."/>
            <person name="Dong W."/>
            <person name="Hu S."/>
            <person name="Zeng C."/>
            <person name="Zhang J."/>
            <person name="Zhang Y."/>
            <person name="Li R."/>
            <person name="Xu Z."/>
            <person name="Li S."/>
            <person name="Li X."/>
            <person name="Zheng H."/>
            <person name="Cong L."/>
            <person name="Lin L."/>
            <person name="Yin J."/>
            <person name="Geng J."/>
            <person name="Li G."/>
            <person name="Shi J."/>
            <person name="Liu J."/>
            <person name="Lv H."/>
            <person name="Li J."/>
            <person name="Wang J."/>
            <person name="Deng Y."/>
            <person name="Ran L."/>
            <person name="Shi X."/>
            <person name="Wang X."/>
            <person name="Wu Q."/>
            <person name="Li C."/>
            <person name="Ren X."/>
            <person name="Wang J."/>
            <person name="Wang X."/>
            <person name="Li D."/>
            <person name="Liu D."/>
            <person name="Zhang X."/>
            <person name="Ji Z."/>
            <person name="Zhao W."/>
            <person name="Sun Y."/>
            <person name="Zhang Z."/>
            <person name="Bao J."/>
            <person name="Han Y."/>
            <person name="Dong L."/>
            <person name="Ji J."/>
            <person name="Chen P."/>
            <person name="Wu S."/>
            <person name="Liu J."/>
            <person name="Xiao Y."/>
            <person name="Bu D."/>
            <person name="Tan J."/>
            <person name="Yang L."/>
            <person name="Ye C."/>
            <person name="Zhang J."/>
            <person name="Xu J."/>
            <person name="Zhou Y."/>
            <person name="Yu Y."/>
            <person name="Zhang B."/>
            <person name="Zhuang S."/>
            <person name="Wei H."/>
            <person name="Liu B."/>
            <person name="Lei M."/>
            <person name="Yu H."/>
            <person name="Li Y."/>
            <person name="Xu H."/>
            <person name="Wei S."/>
            <person name="He X."/>
            <person name="Fang L."/>
            <person name="Zhang Z."/>
            <person name="Zhang Y."/>
            <person name="Huang X."/>
            <person name="Su Z."/>
            <person name="Tong W."/>
            <person name="Li J."/>
            <person name="Tong Z."/>
            <person name="Li S."/>
            <person name="Ye J."/>
            <person name="Wang L."/>
            <person name="Fang L."/>
            <person name="Lei T."/>
            <person name="Chen C.-S."/>
            <person name="Chen H.-C."/>
            <person name="Xu Z."/>
            <person name="Li H."/>
            <person name="Huang H."/>
            <person name="Zhang F."/>
            <person name="Xu H."/>
            <person name="Li N."/>
            <person name="Zhao C."/>
            <person name="Li S."/>
            <person name="Dong L."/>
            <person name="Huang Y."/>
            <person name="Li L."/>
            <person name="Xi Y."/>
            <person name="Qi Q."/>
            <person name="Li W."/>
            <person name="Zhang B."/>
            <person name="Hu W."/>
            <person name="Zhang Y."/>
            <person name="Tian X."/>
            <person name="Jiao Y."/>
            <person name="Liang X."/>
            <person name="Jin J."/>
            <person name="Gao L."/>
            <person name="Zheng W."/>
            <person name="Hao B."/>
            <person name="Liu S.-M."/>
            <person name="Wang W."/>
            <person name="Yuan L."/>
            <person name="Cao M."/>
            <person name="McDermott J."/>
            <person name="Samudrala R."/>
            <person name="Wang J."/>
            <person name="Wong G.K.-S."/>
            <person name="Yang H."/>
        </authorList>
    </citation>
    <scope>NUCLEOTIDE SEQUENCE [LARGE SCALE GENOMIC DNA]</scope>
    <source>
        <strain>cv. Nipponbare</strain>
    </source>
</reference>
<reference key="7">
    <citation type="journal article" date="2003" name="Science">
        <title>Collection, mapping, and annotation of over 28,000 cDNA clones from japonica rice.</title>
        <authorList>
            <consortium name="The rice full-length cDNA consortium"/>
        </authorList>
    </citation>
    <scope>NUCLEOTIDE SEQUENCE [LARGE SCALE MRNA]</scope>
    <source>
        <strain>cv. Nipponbare</strain>
    </source>
</reference>
<organism>
    <name type="scientific">Oryza sativa subsp. japonica</name>
    <name type="common">Rice</name>
    <dbReference type="NCBI Taxonomy" id="39947"/>
    <lineage>
        <taxon>Eukaryota</taxon>
        <taxon>Viridiplantae</taxon>
        <taxon>Streptophyta</taxon>
        <taxon>Embryophyta</taxon>
        <taxon>Tracheophyta</taxon>
        <taxon>Spermatophyta</taxon>
        <taxon>Magnoliopsida</taxon>
        <taxon>Liliopsida</taxon>
        <taxon>Poales</taxon>
        <taxon>Poaceae</taxon>
        <taxon>BOP clade</taxon>
        <taxon>Oryzoideae</taxon>
        <taxon>Oryzeae</taxon>
        <taxon>Oryzinae</taxon>
        <taxon>Oryza</taxon>
        <taxon>Oryza sativa</taxon>
    </lineage>
</organism>
<feature type="chain" id="PRO_0000121172" description="Ras-related protein RIC2">
    <location>
        <begin position="1"/>
        <end position="217"/>
    </location>
</feature>
<feature type="binding site" evidence="1">
    <location>
        <begin position="21"/>
        <end position="28"/>
    </location>
    <ligand>
        <name>GTP</name>
        <dbReference type="ChEBI" id="CHEBI:37565"/>
    </ligand>
</feature>
<feature type="binding site" evidence="1">
    <location>
        <begin position="69"/>
        <end position="73"/>
    </location>
    <ligand>
        <name>GTP</name>
        <dbReference type="ChEBI" id="CHEBI:37565"/>
    </ligand>
</feature>
<feature type="binding site" evidence="1">
    <location>
        <begin position="127"/>
        <end position="130"/>
    </location>
    <ligand>
        <name>GTP</name>
        <dbReference type="ChEBI" id="CHEBI:37565"/>
    </ligand>
</feature>
<feature type="lipid moiety-binding region" description="S-geranylgeranyl cysteine" evidence="1">
    <location>
        <position position="214"/>
    </location>
</feature>
<feature type="lipid moiety-binding region" description="S-geranylgeranyl cysteine" evidence="1">
    <location>
        <position position="215"/>
    </location>
</feature>
<feature type="sequence conflict" description="In Ref. 1; BAA02904." evidence="2" ref="1">
    <original>A</original>
    <variation>E</variation>
    <location>
        <position position="7"/>
    </location>
</feature>